<reference key="1">
    <citation type="journal article" date="2001" name="Nature">
        <title>Genome sequence of Yersinia pestis, the causative agent of plague.</title>
        <authorList>
            <person name="Parkhill J."/>
            <person name="Wren B.W."/>
            <person name="Thomson N.R."/>
            <person name="Titball R.W."/>
            <person name="Holden M.T.G."/>
            <person name="Prentice M.B."/>
            <person name="Sebaihia M."/>
            <person name="James K.D."/>
            <person name="Churcher C.M."/>
            <person name="Mungall K.L."/>
            <person name="Baker S."/>
            <person name="Basham D."/>
            <person name="Bentley S.D."/>
            <person name="Brooks K."/>
            <person name="Cerdeno-Tarraga A.-M."/>
            <person name="Chillingworth T."/>
            <person name="Cronin A."/>
            <person name="Davies R.M."/>
            <person name="Davis P."/>
            <person name="Dougan G."/>
            <person name="Feltwell T."/>
            <person name="Hamlin N."/>
            <person name="Holroyd S."/>
            <person name="Jagels K."/>
            <person name="Karlyshev A.V."/>
            <person name="Leather S."/>
            <person name="Moule S."/>
            <person name="Oyston P.C.F."/>
            <person name="Quail M.A."/>
            <person name="Rutherford K.M."/>
            <person name="Simmonds M."/>
            <person name="Skelton J."/>
            <person name="Stevens K."/>
            <person name="Whitehead S."/>
            <person name="Barrell B.G."/>
        </authorList>
    </citation>
    <scope>NUCLEOTIDE SEQUENCE [LARGE SCALE GENOMIC DNA]</scope>
    <source>
        <strain>CO-92 / Biovar Orientalis</strain>
    </source>
</reference>
<reference key="2">
    <citation type="journal article" date="2002" name="J. Bacteriol.">
        <title>Genome sequence of Yersinia pestis KIM.</title>
        <authorList>
            <person name="Deng W."/>
            <person name="Burland V."/>
            <person name="Plunkett G. III"/>
            <person name="Boutin A."/>
            <person name="Mayhew G.F."/>
            <person name="Liss P."/>
            <person name="Perna N.T."/>
            <person name="Rose D.J."/>
            <person name="Mau B."/>
            <person name="Zhou S."/>
            <person name="Schwartz D.C."/>
            <person name="Fetherston J.D."/>
            <person name="Lindler L.E."/>
            <person name="Brubaker R.R."/>
            <person name="Plano G.V."/>
            <person name="Straley S.C."/>
            <person name="McDonough K.A."/>
            <person name="Nilles M.L."/>
            <person name="Matson J.S."/>
            <person name="Blattner F.R."/>
            <person name="Perry R.D."/>
        </authorList>
    </citation>
    <scope>NUCLEOTIDE SEQUENCE [LARGE SCALE GENOMIC DNA]</scope>
    <source>
        <strain>KIM10+ / Biovar Mediaevalis</strain>
    </source>
</reference>
<reference key="3">
    <citation type="journal article" date="2004" name="DNA Res.">
        <title>Complete genome sequence of Yersinia pestis strain 91001, an isolate avirulent to humans.</title>
        <authorList>
            <person name="Song Y."/>
            <person name="Tong Z."/>
            <person name="Wang J."/>
            <person name="Wang L."/>
            <person name="Guo Z."/>
            <person name="Han Y."/>
            <person name="Zhang J."/>
            <person name="Pei D."/>
            <person name="Zhou D."/>
            <person name="Qin H."/>
            <person name="Pang X."/>
            <person name="Han Y."/>
            <person name="Zhai J."/>
            <person name="Li M."/>
            <person name="Cui B."/>
            <person name="Qi Z."/>
            <person name="Jin L."/>
            <person name="Dai R."/>
            <person name="Chen F."/>
            <person name="Li S."/>
            <person name="Ye C."/>
            <person name="Du Z."/>
            <person name="Lin W."/>
            <person name="Wang J."/>
            <person name="Yu J."/>
            <person name="Yang H."/>
            <person name="Wang J."/>
            <person name="Huang P."/>
            <person name="Yang R."/>
        </authorList>
    </citation>
    <scope>NUCLEOTIDE SEQUENCE [LARGE SCALE GENOMIC DNA]</scope>
    <source>
        <strain>91001 / Biovar Mediaevalis</strain>
    </source>
</reference>
<accession>Q8ZAN0</accession>
<accession>Q0WAP3</accession>
<proteinExistence type="inferred from homology"/>
<feature type="chain" id="PRO_0000109295" description="Fatty acid oxidation complex subunit alpha">
    <location>
        <begin position="1"/>
        <end position="729"/>
    </location>
</feature>
<feature type="region of interest" description="Enoyl-CoA hydratase/isomerase" evidence="1">
    <location>
        <begin position="1"/>
        <end position="189"/>
    </location>
</feature>
<feature type="region of interest" description="3-hydroxyacyl-CoA dehydrogenase" evidence="1">
    <location>
        <begin position="311"/>
        <end position="729"/>
    </location>
</feature>
<feature type="active site" description="For 3-hydroxyacyl-CoA dehydrogenase activity" evidence="1">
    <location>
        <position position="450"/>
    </location>
</feature>
<feature type="binding site" evidence="1">
    <location>
        <position position="296"/>
    </location>
    <ligand>
        <name>substrate</name>
    </ligand>
</feature>
<feature type="binding site" evidence="1">
    <location>
        <position position="324"/>
    </location>
    <ligand>
        <name>NAD(+)</name>
        <dbReference type="ChEBI" id="CHEBI:57540"/>
    </ligand>
</feature>
<feature type="binding site" evidence="1">
    <location>
        <position position="343"/>
    </location>
    <ligand>
        <name>NAD(+)</name>
        <dbReference type="ChEBI" id="CHEBI:57540"/>
    </ligand>
</feature>
<feature type="binding site" evidence="1">
    <location>
        <begin position="400"/>
        <end position="402"/>
    </location>
    <ligand>
        <name>NAD(+)</name>
        <dbReference type="ChEBI" id="CHEBI:57540"/>
    </ligand>
</feature>
<feature type="binding site" evidence="1">
    <location>
        <position position="407"/>
    </location>
    <ligand>
        <name>NAD(+)</name>
        <dbReference type="ChEBI" id="CHEBI:57540"/>
    </ligand>
</feature>
<feature type="binding site" evidence="1">
    <location>
        <position position="429"/>
    </location>
    <ligand>
        <name>NAD(+)</name>
        <dbReference type="ChEBI" id="CHEBI:57540"/>
    </ligand>
</feature>
<feature type="binding site" evidence="1">
    <location>
        <position position="453"/>
    </location>
    <ligand>
        <name>NAD(+)</name>
        <dbReference type="ChEBI" id="CHEBI:57540"/>
    </ligand>
</feature>
<feature type="binding site" evidence="1">
    <location>
        <position position="500"/>
    </location>
    <ligand>
        <name>substrate</name>
    </ligand>
</feature>
<feature type="binding site" evidence="1">
    <location>
        <position position="660"/>
    </location>
    <ligand>
        <name>substrate</name>
    </ligand>
</feature>
<feature type="site" description="Important for catalytic activity" evidence="1">
    <location>
        <position position="119"/>
    </location>
</feature>
<feature type="site" description="Important for catalytic activity" evidence="1">
    <location>
        <position position="139"/>
    </location>
</feature>
<sequence>MLYQSETLQLHWLENGIAELVFDAPGSVNKLDTKTVANLGEALNVLEKQSELKGLLLRSAKTALIVGADITEFLSLFNAPPEKLHQWLVFANTIFNRLEDLPVPTISAINGYALGGGCECILATDFRIASPEARIGLPETKLGIMPGFGGSVRLPRLLGADSALEIIATGKDVTANDALKIGLVDAVVDPEKLVGSALTMLKQAIDGKLDWQAARRPKLEPLKLNPTEAAMCFTIAKGRVMQVAGKHYPAPLTAVKTIEAAAKFGRTEALNLETNSFVPLAGSNEARALVGIFLNDQYVKAQAKKLSKGVAAPKLAAVLGAGIMGGGIAYQSALKSVPVIMKDINENSLDLGMNEAAKLLNKQLERGKVDGLKMASILATIRPTLDYAGIERAQVIVEAVVENPKVKAAVLAEVEALIGEDTVLASNTSTIPIDQLAKSLKRPENFCGMHFFNPVHRMPLVEIIRGAKTSDKTLAAVVAYATQMGKTPIVVNDCPGFFVNRVLFPYLAGFGMLVRDGGDFHQIDKVMEKQFGWPMGPAYLLDVVGIDTAHHAQAVMAAGFPERMNKDYRDAVDVMFDNQRFGQKNGQGFYRYTQDAKGKPRKENDEQVDKLLAEISQPLQEFSDEDIIARTMIPMINEVVRCLEEGIIASAAEGDMALVYGLGFPPFHGGVFRYLDTLGSANYVEMAQRYAHLGALYHVPAGLRAKAEHNESYYPVAAALLDVSTNQPA</sequence>
<name>FADB_YERPE</name>
<protein>
    <recommendedName>
        <fullName evidence="1">Fatty acid oxidation complex subunit alpha</fullName>
    </recommendedName>
    <domain>
        <recommendedName>
            <fullName evidence="1">Enoyl-CoA hydratase/Delta(3)-cis-Delta(2)-trans-enoyl-CoA isomerase/3-hydroxybutyryl-CoA epimerase</fullName>
            <ecNumber evidence="1">4.2.1.17</ecNumber>
            <ecNumber evidence="1">5.1.2.3</ecNumber>
            <ecNumber evidence="1">5.3.3.8</ecNumber>
        </recommendedName>
    </domain>
    <domain>
        <recommendedName>
            <fullName evidence="1">3-hydroxyacyl-CoA dehydrogenase</fullName>
            <ecNumber evidence="1">1.1.1.35</ecNumber>
        </recommendedName>
    </domain>
</protein>
<keyword id="KW-0276">Fatty acid metabolism</keyword>
<keyword id="KW-0413">Isomerase</keyword>
<keyword id="KW-0442">Lipid degradation</keyword>
<keyword id="KW-0443">Lipid metabolism</keyword>
<keyword id="KW-0456">Lyase</keyword>
<keyword id="KW-0511">Multifunctional enzyme</keyword>
<keyword id="KW-0520">NAD</keyword>
<keyword id="KW-0560">Oxidoreductase</keyword>
<keyword id="KW-1185">Reference proteome</keyword>
<evidence type="ECO:0000255" key="1">
    <source>
        <dbReference type="HAMAP-Rule" id="MF_01621"/>
    </source>
</evidence>
<organism>
    <name type="scientific">Yersinia pestis</name>
    <dbReference type="NCBI Taxonomy" id="632"/>
    <lineage>
        <taxon>Bacteria</taxon>
        <taxon>Pseudomonadati</taxon>
        <taxon>Pseudomonadota</taxon>
        <taxon>Gammaproteobacteria</taxon>
        <taxon>Enterobacterales</taxon>
        <taxon>Yersiniaceae</taxon>
        <taxon>Yersinia</taxon>
    </lineage>
</organism>
<gene>
    <name evidence="1" type="primary">fadB</name>
    <name type="ordered locus">YPO3766</name>
    <name type="ordered locus">y0464</name>
    <name type="ordered locus">YP_3282</name>
</gene>
<comment type="function">
    <text evidence="1">Involved in the aerobic and anaerobic degradation of long-chain fatty acids via beta-oxidation cycle. Catalyzes the formation of 3-oxoacyl-CoA from enoyl-CoA via L-3-hydroxyacyl-CoA. It can also use D-3-hydroxyacyl-CoA and cis-3-enoyl-CoA as substrate.</text>
</comment>
<comment type="catalytic activity">
    <reaction evidence="1">
        <text>a (3S)-3-hydroxyacyl-CoA + NAD(+) = a 3-oxoacyl-CoA + NADH + H(+)</text>
        <dbReference type="Rhea" id="RHEA:22432"/>
        <dbReference type="ChEBI" id="CHEBI:15378"/>
        <dbReference type="ChEBI" id="CHEBI:57318"/>
        <dbReference type="ChEBI" id="CHEBI:57540"/>
        <dbReference type="ChEBI" id="CHEBI:57945"/>
        <dbReference type="ChEBI" id="CHEBI:90726"/>
        <dbReference type="EC" id="1.1.1.35"/>
    </reaction>
</comment>
<comment type="catalytic activity">
    <reaction evidence="1">
        <text>a (3S)-3-hydroxyacyl-CoA = a (2E)-enoyl-CoA + H2O</text>
        <dbReference type="Rhea" id="RHEA:16105"/>
        <dbReference type="ChEBI" id="CHEBI:15377"/>
        <dbReference type="ChEBI" id="CHEBI:57318"/>
        <dbReference type="ChEBI" id="CHEBI:58856"/>
        <dbReference type="EC" id="4.2.1.17"/>
    </reaction>
</comment>
<comment type="catalytic activity">
    <reaction evidence="1">
        <text>a 4-saturated-(3S)-3-hydroxyacyl-CoA = a (3E)-enoyl-CoA + H2O</text>
        <dbReference type="Rhea" id="RHEA:20724"/>
        <dbReference type="ChEBI" id="CHEBI:15377"/>
        <dbReference type="ChEBI" id="CHEBI:58521"/>
        <dbReference type="ChEBI" id="CHEBI:137480"/>
        <dbReference type="EC" id="4.2.1.17"/>
    </reaction>
</comment>
<comment type="catalytic activity">
    <reaction evidence="1">
        <text>(3S)-3-hydroxybutanoyl-CoA = (3R)-3-hydroxybutanoyl-CoA</text>
        <dbReference type="Rhea" id="RHEA:21760"/>
        <dbReference type="ChEBI" id="CHEBI:57315"/>
        <dbReference type="ChEBI" id="CHEBI:57316"/>
        <dbReference type="EC" id="5.1.2.3"/>
    </reaction>
</comment>
<comment type="catalytic activity">
    <reaction evidence="1">
        <text>a (3Z)-enoyl-CoA = a 4-saturated (2E)-enoyl-CoA</text>
        <dbReference type="Rhea" id="RHEA:45900"/>
        <dbReference type="ChEBI" id="CHEBI:85097"/>
        <dbReference type="ChEBI" id="CHEBI:85489"/>
        <dbReference type="EC" id="5.3.3.8"/>
    </reaction>
</comment>
<comment type="catalytic activity">
    <reaction evidence="1">
        <text>a (3E)-enoyl-CoA = a 4-saturated (2E)-enoyl-CoA</text>
        <dbReference type="Rhea" id="RHEA:45228"/>
        <dbReference type="ChEBI" id="CHEBI:58521"/>
        <dbReference type="ChEBI" id="CHEBI:85097"/>
        <dbReference type="EC" id="5.3.3.8"/>
    </reaction>
</comment>
<comment type="pathway">
    <text evidence="1">Lipid metabolism; fatty acid beta-oxidation.</text>
</comment>
<comment type="subunit">
    <text evidence="1">Heterotetramer of two alpha chains (FadB) and two beta chains (FadA).</text>
</comment>
<comment type="similarity">
    <text evidence="1">In the N-terminal section; belongs to the enoyl-CoA hydratase/isomerase family.</text>
</comment>
<comment type="similarity">
    <text evidence="1">In the C-terminal section; belongs to the 3-hydroxyacyl-CoA dehydrogenase family.</text>
</comment>
<dbReference type="EC" id="4.2.1.17" evidence="1"/>
<dbReference type="EC" id="5.1.2.3" evidence="1"/>
<dbReference type="EC" id="5.3.3.8" evidence="1"/>
<dbReference type="EC" id="1.1.1.35" evidence="1"/>
<dbReference type="EMBL" id="AL590842">
    <property type="protein sequence ID" value="CAL22353.1"/>
    <property type="molecule type" value="Genomic_DNA"/>
</dbReference>
<dbReference type="EMBL" id="AE009952">
    <property type="protein sequence ID" value="AAM84053.1"/>
    <property type="molecule type" value="Genomic_DNA"/>
</dbReference>
<dbReference type="EMBL" id="AE017042">
    <property type="protein sequence ID" value="AAS63449.1"/>
    <property type="molecule type" value="Genomic_DNA"/>
</dbReference>
<dbReference type="PIR" id="AF0458">
    <property type="entry name" value="AF0458"/>
</dbReference>
<dbReference type="RefSeq" id="WP_002211546.1">
    <property type="nucleotide sequence ID" value="NZ_WUCM01000112.1"/>
</dbReference>
<dbReference type="RefSeq" id="YP_002348645.1">
    <property type="nucleotide sequence ID" value="NC_003143.1"/>
</dbReference>
<dbReference type="SMR" id="Q8ZAN0"/>
<dbReference type="IntAct" id="Q8ZAN0">
    <property type="interactions" value="6"/>
</dbReference>
<dbReference type="STRING" id="214092.YPO3766"/>
<dbReference type="PaxDb" id="214092-YPO3766"/>
<dbReference type="DNASU" id="1145411"/>
<dbReference type="EnsemblBacteria" id="AAS63449">
    <property type="protein sequence ID" value="AAS63449"/>
    <property type="gene ID" value="YP_3282"/>
</dbReference>
<dbReference type="GeneID" id="57974942"/>
<dbReference type="KEGG" id="ype:YPO3766"/>
<dbReference type="KEGG" id="ypk:y0464"/>
<dbReference type="KEGG" id="ypm:YP_3282"/>
<dbReference type="PATRIC" id="fig|214092.21.peg.4288"/>
<dbReference type="eggNOG" id="COG1024">
    <property type="taxonomic scope" value="Bacteria"/>
</dbReference>
<dbReference type="eggNOG" id="COG1250">
    <property type="taxonomic scope" value="Bacteria"/>
</dbReference>
<dbReference type="HOGENOM" id="CLU_009834_16_3_6"/>
<dbReference type="OMA" id="YNGAAMG"/>
<dbReference type="OrthoDB" id="5389341at2"/>
<dbReference type="UniPathway" id="UPA00659"/>
<dbReference type="Proteomes" id="UP000000815">
    <property type="component" value="Chromosome"/>
</dbReference>
<dbReference type="Proteomes" id="UP000001019">
    <property type="component" value="Chromosome"/>
</dbReference>
<dbReference type="Proteomes" id="UP000002490">
    <property type="component" value="Chromosome"/>
</dbReference>
<dbReference type="GO" id="GO:0036125">
    <property type="term" value="C:fatty acid beta-oxidation multienzyme complex"/>
    <property type="evidence" value="ECO:0007669"/>
    <property type="project" value="InterPro"/>
</dbReference>
<dbReference type="GO" id="GO:0008692">
    <property type="term" value="F:3-hydroxybutyryl-CoA epimerase activity"/>
    <property type="evidence" value="ECO:0007669"/>
    <property type="project" value="UniProtKB-UniRule"/>
</dbReference>
<dbReference type="GO" id="GO:0004165">
    <property type="term" value="F:delta(3)-delta(2)-enoyl-CoA isomerase activity"/>
    <property type="evidence" value="ECO:0007669"/>
    <property type="project" value="UniProtKB-UniRule"/>
</dbReference>
<dbReference type="GO" id="GO:0004300">
    <property type="term" value="F:enoyl-CoA hydratase activity"/>
    <property type="evidence" value="ECO:0000318"/>
    <property type="project" value="GO_Central"/>
</dbReference>
<dbReference type="GO" id="GO:0016509">
    <property type="term" value="F:long-chain-3-hydroxyacyl-CoA dehydrogenase activity"/>
    <property type="evidence" value="ECO:0000318"/>
    <property type="project" value="GO_Central"/>
</dbReference>
<dbReference type="GO" id="GO:0070403">
    <property type="term" value="F:NAD+ binding"/>
    <property type="evidence" value="ECO:0007669"/>
    <property type="project" value="InterPro"/>
</dbReference>
<dbReference type="GO" id="GO:0006635">
    <property type="term" value="P:fatty acid beta-oxidation"/>
    <property type="evidence" value="ECO:0000318"/>
    <property type="project" value="GO_Central"/>
</dbReference>
<dbReference type="CDD" id="cd06558">
    <property type="entry name" value="crotonase-like"/>
    <property type="match status" value="1"/>
</dbReference>
<dbReference type="FunFam" id="1.10.1040.50:FF:000001">
    <property type="entry name" value="Fatty acid oxidation complex subunit alpha"/>
    <property type="match status" value="1"/>
</dbReference>
<dbReference type="FunFam" id="3.90.226.10:FF:000018">
    <property type="entry name" value="Fatty acid oxidation complex subunit alpha"/>
    <property type="match status" value="1"/>
</dbReference>
<dbReference type="FunFam" id="3.40.50.720:FF:000009">
    <property type="entry name" value="Fatty oxidation complex, alpha subunit"/>
    <property type="match status" value="1"/>
</dbReference>
<dbReference type="Gene3D" id="1.10.1040.50">
    <property type="match status" value="1"/>
</dbReference>
<dbReference type="Gene3D" id="3.90.226.10">
    <property type="entry name" value="2-enoyl-CoA Hydratase, Chain A, domain 1"/>
    <property type="match status" value="1"/>
</dbReference>
<dbReference type="Gene3D" id="3.40.50.720">
    <property type="entry name" value="NAD(P)-binding Rossmann-like Domain"/>
    <property type="match status" value="1"/>
</dbReference>
<dbReference type="HAMAP" id="MF_01621">
    <property type="entry name" value="FadB"/>
    <property type="match status" value="1"/>
</dbReference>
<dbReference type="InterPro" id="IPR006180">
    <property type="entry name" value="3-OHacyl-CoA_DH_CS"/>
</dbReference>
<dbReference type="InterPro" id="IPR006176">
    <property type="entry name" value="3-OHacyl-CoA_DH_NAD-bd"/>
</dbReference>
<dbReference type="InterPro" id="IPR006108">
    <property type="entry name" value="3HC_DH_C"/>
</dbReference>
<dbReference type="InterPro" id="IPR008927">
    <property type="entry name" value="6-PGluconate_DH-like_C_sf"/>
</dbReference>
<dbReference type="InterPro" id="IPR029045">
    <property type="entry name" value="ClpP/crotonase-like_dom_sf"/>
</dbReference>
<dbReference type="InterPro" id="IPR018376">
    <property type="entry name" value="Enoyl-CoA_hyd/isom_CS"/>
</dbReference>
<dbReference type="InterPro" id="IPR001753">
    <property type="entry name" value="Enoyl-CoA_hydra/iso"/>
</dbReference>
<dbReference type="InterPro" id="IPR050136">
    <property type="entry name" value="FA_oxidation_alpha_subunit"/>
</dbReference>
<dbReference type="InterPro" id="IPR012799">
    <property type="entry name" value="FadB"/>
</dbReference>
<dbReference type="InterPro" id="IPR036291">
    <property type="entry name" value="NAD(P)-bd_dom_sf"/>
</dbReference>
<dbReference type="NCBIfam" id="TIGR02437">
    <property type="entry name" value="FadB"/>
    <property type="match status" value="1"/>
</dbReference>
<dbReference type="NCBIfam" id="NF008727">
    <property type="entry name" value="PRK11730.1"/>
    <property type="match status" value="1"/>
</dbReference>
<dbReference type="PANTHER" id="PTHR43612">
    <property type="entry name" value="TRIFUNCTIONAL ENZYME SUBUNIT ALPHA"/>
    <property type="match status" value="1"/>
</dbReference>
<dbReference type="PANTHER" id="PTHR43612:SF3">
    <property type="entry name" value="TRIFUNCTIONAL ENZYME SUBUNIT ALPHA, MITOCHONDRIAL"/>
    <property type="match status" value="1"/>
</dbReference>
<dbReference type="Pfam" id="PF00725">
    <property type="entry name" value="3HCDH"/>
    <property type="match status" value="1"/>
</dbReference>
<dbReference type="Pfam" id="PF02737">
    <property type="entry name" value="3HCDH_N"/>
    <property type="match status" value="1"/>
</dbReference>
<dbReference type="Pfam" id="PF00378">
    <property type="entry name" value="ECH_1"/>
    <property type="match status" value="1"/>
</dbReference>
<dbReference type="SUPFAM" id="SSF48179">
    <property type="entry name" value="6-phosphogluconate dehydrogenase C-terminal domain-like"/>
    <property type="match status" value="2"/>
</dbReference>
<dbReference type="SUPFAM" id="SSF52096">
    <property type="entry name" value="ClpP/crotonase"/>
    <property type="match status" value="1"/>
</dbReference>
<dbReference type="SUPFAM" id="SSF51735">
    <property type="entry name" value="NAD(P)-binding Rossmann-fold domains"/>
    <property type="match status" value="1"/>
</dbReference>
<dbReference type="PROSITE" id="PS00067">
    <property type="entry name" value="3HCDH"/>
    <property type="match status" value="1"/>
</dbReference>
<dbReference type="PROSITE" id="PS00166">
    <property type="entry name" value="ENOYL_COA_HYDRATASE"/>
    <property type="match status" value="1"/>
</dbReference>